<keyword id="KW-0349">Heme</keyword>
<keyword id="KW-0376">Hydrogen peroxide</keyword>
<keyword id="KW-0408">Iron</keyword>
<keyword id="KW-0479">Metal-binding</keyword>
<keyword id="KW-0560">Oxidoreductase</keyword>
<keyword id="KW-0575">Peroxidase</keyword>
<name>KATG_MYCSS</name>
<feature type="chain" id="PRO_0000354843" description="Catalase-peroxidase">
    <location>
        <begin position="1"/>
        <end position="749"/>
    </location>
</feature>
<feature type="region of interest" description="Disordered" evidence="2">
    <location>
        <begin position="1"/>
        <end position="40"/>
    </location>
</feature>
<feature type="compositionally biased region" description="Basic and acidic residues" evidence="2">
    <location>
        <begin position="1"/>
        <end position="12"/>
    </location>
</feature>
<feature type="compositionally biased region" description="Polar residues" evidence="2">
    <location>
        <begin position="14"/>
        <end position="24"/>
    </location>
</feature>
<feature type="active site" description="Proton acceptor" evidence="1">
    <location>
        <position position="114"/>
    </location>
</feature>
<feature type="binding site" description="axial binding residue" evidence="1">
    <location>
        <position position="281"/>
    </location>
    <ligand>
        <name>heme b</name>
        <dbReference type="ChEBI" id="CHEBI:60344"/>
    </ligand>
    <ligandPart>
        <name>Fe</name>
        <dbReference type="ChEBI" id="CHEBI:18248"/>
    </ligandPart>
</feature>
<feature type="site" description="Transition state stabilizer" evidence="1">
    <location>
        <position position="110"/>
    </location>
</feature>
<feature type="cross-link" description="Tryptophyl-tyrosyl-methioninium (Trp-Tyr) (with M-266)" evidence="1">
    <location>
        <begin position="113"/>
        <end position="240"/>
    </location>
</feature>
<feature type="cross-link" description="Tryptophyl-tyrosyl-methioninium (Tyr-Met) (with W-113)" evidence="1">
    <location>
        <begin position="240"/>
        <end position="266"/>
    </location>
</feature>
<evidence type="ECO:0000255" key="1">
    <source>
        <dbReference type="HAMAP-Rule" id="MF_01961"/>
    </source>
</evidence>
<evidence type="ECO:0000256" key="2">
    <source>
        <dbReference type="SAM" id="MobiDB-lite"/>
    </source>
</evidence>
<gene>
    <name evidence="1" type="primary">katG</name>
    <name type="ordered locus">Mmcs_2682</name>
</gene>
<comment type="function">
    <text evidence="1">Bifunctional enzyme with both catalase and broad-spectrum peroxidase activity.</text>
</comment>
<comment type="catalytic activity">
    <reaction evidence="1">
        <text>H2O2 + AH2 = A + 2 H2O</text>
        <dbReference type="Rhea" id="RHEA:30275"/>
        <dbReference type="ChEBI" id="CHEBI:13193"/>
        <dbReference type="ChEBI" id="CHEBI:15377"/>
        <dbReference type="ChEBI" id="CHEBI:16240"/>
        <dbReference type="ChEBI" id="CHEBI:17499"/>
        <dbReference type="EC" id="1.11.1.21"/>
    </reaction>
</comment>
<comment type="catalytic activity">
    <reaction evidence="1">
        <text>2 H2O2 = O2 + 2 H2O</text>
        <dbReference type="Rhea" id="RHEA:20309"/>
        <dbReference type="ChEBI" id="CHEBI:15377"/>
        <dbReference type="ChEBI" id="CHEBI:15379"/>
        <dbReference type="ChEBI" id="CHEBI:16240"/>
        <dbReference type="EC" id="1.11.1.21"/>
    </reaction>
</comment>
<comment type="cofactor">
    <cofactor evidence="1">
        <name>heme b</name>
        <dbReference type="ChEBI" id="CHEBI:60344"/>
    </cofactor>
    <text evidence="1">Binds 1 heme b (iron(II)-protoporphyrin IX) group per dimer.</text>
</comment>
<comment type="subunit">
    <text evidence="1">Homodimer or homotetramer.</text>
</comment>
<comment type="PTM">
    <text evidence="1">Formation of the three residue Trp-Tyr-Met cross-link is important for the catalase, but not the peroxidase activity of the enzyme.</text>
</comment>
<comment type="similarity">
    <text evidence="1">Belongs to the peroxidase family. Peroxidase/catalase subfamily.</text>
</comment>
<organism>
    <name type="scientific">Mycobacterium sp. (strain MCS)</name>
    <dbReference type="NCBI Taxonomy" id="164756"/>
    <lineage>
        <taxon>Bacteria</taxon>
        <taxon>Bacillati</taxon>
        <taxon>Actinomycetota</taxon>
        <taxon>Actinomycetes</taxon>
        <taxon>Mycobacteriales</taxon>
        <taxon>Mycobacteriaceae</taxon>
        <taxon>Mycobacterium</taxon>
    </lineage>
</organism>
<dbReference type="EC" id="1.11.1.21" evidence="1"/>
<dbReference type="EMBL" id="CP000384">
    <property type="protein sequence ID" value="ABG08790.1"/>
    <property type="molecule type" value="Genomic_DNA"/>
</dbReference>
<dbReference type="SMR" id="Q1B8J4"/>
<dbReference type="KEGG" id="mmc:Mmcs_2682"/>
<dbReference type="HOGENOM" id="CLU_025424_2_0_11"/>
<dbReference type="BioCyc" id="MSP164756:G1G6O-2737-MONOMER"/>
<dbReference type="GO" id="GO:0005829">
    <property type="term" value="C:cytosol"/>
    <property type="evidence" value="ECO:0007669"/>
    <property type="project" value="TreeGrafter"/>
</dbReference>
<dbReference type="GO" id="GO:0004096">
    <property type="term" value="F:catalase activity"/>
    <property type="evidence" value="ECO:0007669"/>
    <property type="project" value="UniProtKB-UniRule"/>
</dbReference>
<dbReference type="GO" id="GO:0020037">
    <property type="term" value="F:heme binding"/>
    <property type="evidence" value="ECO:0007669"/>
    <property type="project" value="InterPro"/>
</dbReference>
<dbReference type="GO" id="GO:0046872">
    <property type="term" value="F:metal ion binding"/>
    <property type="evidence" value="ECO:0007669"/>
    <property type="project" value="UniProtKB-KW"/>
</dbReference>
<dbReference type="GO" id="GO:0070301">
    <property type="term" value="P:cellular response to hydrogen peroxide"/>
    <property type="evidence" value="ECO:0007669"/>
    <property type="project" value="TreeGrafter"/>
</dbReference>
<dbReference type="GO" id="GO:0042744">
    <property type="term" value="P:hydrogen peroxide catabolic process"/>
    <property type="evidence" value="ECO:0007669"/>
    <property type="project" value="UniProtKB-KW"/>
</dbReference>
<dbReference type="CDD" id="cd08200">
    <property type="entry name" value="catalase_peroxidase_2"/>
    <property type="match status" value="1"/>
</dbReference>
<dbReference type="FunFam" id="1.10.420.10:FF:000004">
    <property type="entry name" value="Catalase-peroxidase"/>
    <property type="match status" value="1"/>
</dbReference>
<dbReference type="FunFam" id="1.10.520.10:FF:000002">
    <property type="entry name" value="Catalase-peroxidase"/>
    <property type="match status" value="1"/>
</dbReference>
<dbReference type="Gene3D" id="1.10.520.10">
    <property type="match status" value="2"/>
</dbReference>
<dbReference type="Gene3D" id="1.10.420.10">
    <property type="entry name" value="Peroxidase, domain 2"/>
    <property type="match status" value="2"/>
</dbReference>
<dbReference type="HAMAP" id="MF_01961">
    <property type="entry name" value="Catal_peroxid"/>
    <property type="match status" value="1"/>
</dbReference>
<dbReference type="InterPro" id="IPR000763">
    <property type="entry name" value="Catalase_peroxidase"/>
</dbReference>
<dbReference type="InterPro" id="IPR002016">
    <property type="entry name" value="Haem_peroxidase"/>
</dbReference>
<dbReference type="InterPro" id="IPR010255">
    <property type="entry name" value="Haem_peroxidase_sf"/>
</dbReference>
<dbReference type="InterPro" id="IPR019794">
    <property type="entry name" value="Peroxidases_AS"/>
</dbReference>
<dbReference type="InterPro" id="IPR019793">
    <property type="entry name" value="Peroxidases_heam-ligand_BS"/>
</dbReference>
<dbReference type="NCBIfam" id="TIGR00198">
    <property type="entry name" value="cat_per_HPI"/>
    <property type="match status" value="1"/>
</dbReference>
<dbReference type="NCBIfam" id="NF011635">
    <property type="entry name" value="PRK15061.1"/>
    <property type="match status" value="1"/>
</dbReference>
<dbReference type="PANTHER" id="PTHR30555:SF0">
    <property type="entry name" value="CATALASE-PEROXIDASE"/>
    <property type="match status" value="1"/>
</dbReference>
<dbReference type="PANTHER" id="PTHR30555">
    <property type="entry name" value="HYDROPEROXIDASE I, BIFUNCTIONAL CATALASE-PEROXIDASE"/>
    <property type="match status" value="1"/>
</dbReference>
<dbReference type="Pfam" id="PF00141">
    <property type="entry name" value="peroxidase"/>
    <property type="match status" value="2"/>
</dbReference>
<dbReference type="PRINTS" id="PR00460">
    <property type="entry name" value="BPEROXIDASE"/>
</dbReference>
<dbReference type="PRINTS" id="PR00458">
    <property type="entry name" value="PEROXIDASE"/>
</dbReference>
<dbReference type="SUPFAM" id="SSF48113">
    <property type="entry name" value="Heme-dependent peroxidases"/>
    <property type="match status" value="2"/>
</dbReference>
<dbReference type="PROSITE" id="PS00435">
    <property type="entry name" value="PEROXIDASE_1"/>
    <property type="match status" value="1"/>
</dbReference>
<dbReference type="PROSITE" id="PS00436">
    <property type="entry name" value="PEROXIDASE_2"/>
    <property type="match status" value="1"/>
</dbReference>
<dbReference type="PROSITE" id="PS50873">
    <property type="entry name" value="PEROXIDASE_4"/>
    <property type="match status" value="1"/>
</dbReference>
<accession>Q1B8J4</accession>
<proteinExistence type="inferred from homology"/>
<reference key="1">
    <citation type="submission" date="2006-06" db="EMBL/GenBank/DDBJ databases">
        <title>Complete sequence of chromosome of Mycobacterium sp. MCS.</title>
        <authorList>
            <consortium name="US DOE Joint Genome Institute"/>
            <person name="Copeland A."/>
            <person name="Lucas S."/>
            <person name="Lapidus A."/>
            <person name="Barry K."/>
            <person name="Detter J.C."/>
            <person name="Glavina del Rio T."/>
            <person name="Hammon N."/>
            <person name="Israni S."/>
            <person name="Dalin E."/>
            <person name="Tice H."/>
            <person name="Pitluck S."/>
            <person name="Martinez M."/>
            <person name="Schmutz J."/>
            <person name="Larimer F."/>
            <person name="Land M."/>
            <person name="Hauser L."/>
            <person name="Kyrpides N."/>
            <person name="Kim E."/>
            <person name="Miller C.D."/>
            <person name="Hughes J.E."/>
            <person name="Anderson A.J."/>
            <person name="Sims R.C."/>
            <person name="Richardson P."/>
        </authorList>
    </citation>
    <scope>NUCLEOTIDE SEQUENCE [LARGE SCALE GENOMIC DNA]</scope>
    <source>
        <strain>MCS</strain>
    </source>
</reference>
<sequence length="749" mass="82684">MSSDTSDTRPPHSDSGTQSNSESENPIIDSPEPKAHAPLTNKDWWPEQVDVSVLHKQNDKGNPLGEDFNYAEAFAQLDLEAFKRDVIEVIQTSQDWWPADYGNYAGLFIRMSWHAAGTYRIFDGRGGAGQGSQRFAPLNSWPDNANLDKARRLLWPIKQKYGNKISWADLIAYAGNAALEQSGFKTAGFAFGREDIWEPEEMLWGQEDTWLGTDKRYGGTNEDKRELAEPFGATTMGLIYVNPEGPEGKPDPLAAAHDIRETFGRMAMNDEETAALIVGGHTLGKTHGAADVNVGPEPEGAPIEEQGLGWKCPFGTGNANDTVTSGLEVIWTGTNSEWSNRYLEILYGNEWELTKSPAGAWQFEAKNAEATIPDPFGGPPRKPTMLVTDVSMREDPIYGQITRRWLDHPEEMDEAFAKAWYKLMHRDMGPISRYLGPWVAEPEIWQDPVPDVDHELVDESDIASLKSKVLESGLTVQQLVKTAWASASSFRGTDKRGGANGARVRLEPQRSWEGNEPAELAKVLPTLEQIQQDFNASASGGKKISLADLIVLAGSAAVEKAAKDAGYEIDVHFAPGRTDASQEQTDVESFAVLETKADGFRNYIRPGQKTSVEKLLVEKAYLLDLTAPEMTALLGGLRVLNVNHGGSKHGVFTNSPGALSNDFFVNLLDMNTAWKPSENTENVFEGRDRATGEIKWTATANDLVFGSNSVLRGIAEVYAQDDSKDKFVEDFVAAWVKVMNNDRFDLEKF</sequence>
<protein>
    <recommendedName>
        <fullName evidence="1">Catalase-peroxidase</fullName>
        <shortName evidence="1">CP</shortName>
        <ecNumber evidence="1">1.11.1.21</ecNumber>
    </recommendedName>
    <alternativeName>
        <fullName evidence="1">Peroxidase/catalase</fullName>
    </alternativeName>
</protein>